<evidence type="ECO:0000255" key="1">
    <source>
        <dbReference type="HAMAP-Rule" id="MF_00014"/>
    </source>
</evidence>
<feature type="chain" id="PRO_0000351732" description="Ribosome maturation factor RimM">
    <location>
        <begin position="1"/>
        <end position="230"/>
    </location>
</feature>
<feature type="domain" description="PRC barrel" evidence="1">
    <location>
        <begin position="149"/>
        <end position="230"/>
    </location>
</feature>
<keyword id="KW-0143">Chaperone</keyword>
<keyword id="KW-0963">Cytoplasm</keyword>
<keyword id="KW-0690">Ribosome biogenesis</keyword>
<keyword id="KW-0698">rRNA processing</keyword>
<reference key="1">
    <citation type="journal article" date="2010" name="Genome Biol. Evol.">
        <title>Continuing evolution of Burkholderia mallei through genome reduction and large-scale rearrangements.</title>
        <authorList>
            <person name="Losada L."/>
            <person name="Ronning C.M."/>
            <person name="DeShazer D."/>
            <person name="Woods D."/>
            <person name="Fedorova N."/>
            <person name="Kim H.S."/>
            <person name="Shabalina S.A."/>
            <person name="Pearson T.R."/>
            <person name="Brinkac L."/>
            <person name="Tan P."/>
            <person name="Nandi T."/>
            <person name="Crabtree J."/>
            <person name="Badger J."/>
            <person name="Beckstrom-Sternberg S."/>
            <person name="Saqib M."/>
            <person name="Schutzer S.E."/>
            <person name="Keim P."/>
            <person name="Nierman W.C."/>
        </authorList>
    </citation>
    <scope>NUCLEOTIDE SEQUENCE [LARGE SCALE GENOMIC DNA]</scope>
    <source>
        <strain>NCTC 10229</strain>
    </source>
</reference>
<gene>
    <name evidence="1" type="primary">rimM</name>
    <name type="ordered locus">BMA10229_A0918</name>
</gene>
<dbReference type="EMBL" id="CP000546">
    <property type="protein sequence ID" value="ABN03057.1"/>
    <property type="molecule type" value="Genomic_DNA"/>
</dbReference>
<dbReference type="SMR" id="A2S4N9"/>
<dbReference type="KEGG" id="bml:BMA10229_A0918"/>
<dbReference type="HOGENOM" id="CLU_077636_1_0_4"/>
<dbReference type="Proteomes" id="UP000002283">
    <property type="component" value="Chromosome I"/>
</dbReference>
<dbReference type="GO" id="GO:0005737">
    <property type="term" value="C:cytoplasm"/>
    <property type="evidence" value="ECO:0007669"/>
    <property type="project" value="UniProtKB-SubCell"/>
</dbReference>
<dbReference type="GO" id="GO:0005840">
    <property type="term" value="C:ribosome"/>
    <property type="evidence" value="ECO:0007669"/>
    <property type="project" value="InterPro"/>
</dbReference>
<dbReference type="GO" id="GO:0043022">
    <property type="term" value="F:ribosome binding"/>
    <property type="evidence" value="ECO:0007669"/>
    <property type="project" value="InterPro"/>
</dbReference>
<dbReference type="GO" id="GO:0042274">
    <property type="term" value="P:ribosomal small subunit biogenesis"/>
    <property type="evidence" value="ECO:0007669"/>
    <property type="project" value="UniProtKB-UniRule"/>
</dbReference>
<dbReference type="GO" id="GO:0006364">
    <property type="term" value="P:rRNA processing"/>
    <property type="evidence" value="ECO:0007669"/>
    <property type="project" value="UniProtKB-UniRule"/>
</dbReference>
<dbReference type="Gene3D" id="2.30.30.240">
    <property type="entry name" value="PRC-barrel domain"/>
    <property type="match status" value="1"/>
</dbReference>
<dbReference type="Gene3D" id="2.40.30.60">
    <property type="entry name" value="RimM"/>
    <property type="match status" value="1"/>
</dbReference>
<dbReference type="HAMAP" id="MF_00014">
    <property type="entry name" value="Ribosome_mat_RimM"/>
    <property type="match status" value="1"/>
</dbReference>
<dbReference type="InterPro" id="IPR011033">
    <property type="entry name" value="PRC_barrel-like_sf"/>
</dbReference>
<dbReference type="InterPro" id="IPR056792">
    <property type="entry name" value="PRC_RimM"/>
</dbReference>
<dbReference type="InterPro" id="IPR011961">
    <property type="entry name" value="RimM"/>
</dbReference>
<dbReference type="InterPro" id="IPR002676">
    <property type="entry name" value="RimM_N"/>
</dbReference>
<dbReference type="InterPro" id="IPR036976">
    <property type="entry name" value="RimM_N_sf"/>
</dbReference>
<dbReference type="InterPro" id="IPR009000">
    <property type="entry name" value="Transl_B-barrel_sf"/>
</dbReference>
<dbReference type="NCBIfam" id="TIGR02273">
    <property type="entry name" value="16S_RimM"/>
    <property type="match status" value="1"/>
</dbReference>
<dbReference type="PANTHER" id="PTHR33692">
    <property type="entry name" value="RIBOSOME MATURATION FACTOR RIMM"/>
    <property type="match status" value="1"/>
</dbReference>
<dbReference type="PANTHER" id="PTHR33692:SF1">
    <property type="entry name" value="RIBOSOME MATURATION FACTOR RIMM"/>
    <property type="match status" value="1"/>
</dbReference>
<dbReference type="Pfam" id="PF24986">
    <property type="entry name" value="PRC_RimM"/>
    <property type="match status" value="1"/>
</dbReference>
<dbReference type="Pfam" id="PF01782">
    <property type="entry name" value="RimM"/>
    <property type="match status" value="1"/>
</dbReference>
<dbReference type="SUPFAM" id="SSF50346">
    <property type="entry name" value="PRC-barrel domain"/>
    <property type="match status" value="1"/>
</dbReference>
<dbReference type="SUPFAM" id="SSF50447">
    <property type="entry name" value="Translation proteins"/>
    <property type="match status" value="1"/>
</dbReference>
<sequence length="230" mass="24561">MMAGHDSGNAKRGRSPSFGVFVRKPVERAPAKGASDGAVDSQAIRIDAAQSWPDDAVEVGAVVDAYGLKGWVKLAAHAGAGRGGDALLKARDWWLQKGAERKFARVTQAKLHGDTVVAHPDGSVDRDTALALRGARVFVRRGDFPALAADEFYWVDLIGLDVVNEAGVALGKIADMIDNGVHSIMRVEYPATGKDGRPKTGERLIPFVGVYVKAVEQAAGRVVVDWEADY</sequence>
<organism>
    <name type="scientific">Burkholderia mallei (strain NCTC 10229)</name>
    <dbReference type="NCBI Taxonomy" id="412022"/>
    <lineage>
        <taxon>Bacteria</taxon>
        <taxon>Pseudomonadati</taxon>
        <taxon>Pseudomonadota</taxon>
        <taxon>Betaproteobacteria</taxon>
        <taxon>Burkholderiales</taxon>
        <taxon>Burkholderiaceae</taxon>
        <taxon>Burkholderia</taxon>
        <taxon>pseudomallei group</taxon>
    </lineage>
</organism>
<accession>A2S4N9</accession>
<proteinExistence type="inferred from homology"/>
<protein>
    <recommendedName>
        <fullName evidence="1">Ribosome maturation factor RimM</fullName>
    </recommendedName>
</protein>
<comment type="function">
    <text evidence="1">An accessory protein needed during the final step in the assembly of 30S ribosomal subunit, possibly for assembly of the head region. Essential for efficient processing of 16S rRNA. May be needed both before and after RbfA during the maturation of 16S rRNA. It has affinity for free ribosomal 30S subunits but not for 70S ribosomes.</text>
</comment>
<comment type="subunit">
    <text evidence="1">Binds ribosomal protein uS19.</text>
</comment>
<comment type="subcellular location">
    <subcellularLocation>
        <location evidence="1">Cytoplasm</location>
    </subcellularLocation>
</comment>
<comment type="domain">
    <text evidence="1">The PRC barrel domain binds ribosomal protein uS19.</text>
</comment>
<comment type="similarity">
    <text evidence="1">Belongs to the RimM family.</text>
</comment>
<name>RIMM_BURM9</name>